<protein>
    <recommendedName>
        <fullName>RNA annealing protein YRA2</fullName>
    </recommendedName>
</protein>
<proteinExistence type="inferred from homology"/>
<accession>Q6FNF9</accession>
<gene>
    <name type="primary">YRA2</name>
    <name type="ordered locus">CAGL0K00253g</name>
</gene>
<name>YRA2_CANGA</name>
<organism>
    <name type="scientific">Candida glabrata (strain ATCC 2001 / BCRC 20586 / JCM 3761 / NBRC 0622 / NRRL Y-65 / CBS 138)</name>
    <name type="common">Yeast</name>
    <name type="synonym">Nakaseomyces glabratus</name>
    <dbReference type="NCBI Taxonomy" id="284593"/>
    <lineage>
        <taxon>Eukaryota</taxon>
        <taxon>Fungi</taxon>
        <taxon>Dikarya</taxon>
        <taxon>Ascomycota</taxon>
        <taxon>Saccharomycotina</taxon>
        <taxon>Saccharomycetes</taxon>
        <taxon>Saccharomycetales</taxon>
        <taxon>Saccharomycetaceae</taxon>
        <taxon>Nakaseomyces</taxon>
    </lineage>
</organism>
<comment type="function">
    <text evidence="1">Involved in export of poly(A) mRNAs from the nucleus. Recruited to the coding sequences as well as poly-A sites of active genes (By similarity).</text>
</comment>
<comment type="subunit">
    <text evidence="1">Associates with mRNPs.</text>
</comment>
<comment type="subcellular location">
    <subcellularLocation>
        <location evidence="1">Nucleus</location>
    </subcellularLocation>
</comment>
<comment type="similarity">
    <text evidence="4">Belongs to the YRA1 family.</text>
</comment>
<dbReference type="EMBL" id="CR380957">
    <property type="protein sequence ID" value="CAG61196.1"/>
    <property type="molecule type" value="Genomic_DNA"/>
</dbReference>
<dbReference type="RefSeq" id="XP_448235.1">
    <property type="nucleotide sequence ID" value="XM_448235.1"/>
</dbReference>
<dbReference type="SMR" id="Q6FNF9"/>
<dbReference type="FunCoup" id="Q6FNF9">
    <property type="interactions" value="212"/>
</dbReference>
<dbReference type="STRING" id="284593.Q6FNF9"/>
<dbReference type="EnsemblFungi" id="CAGL0K00253g-T">
    <property type="protein sequence ID" value="CAGL0K00253g-T-p1"/>
    <property type="gene ID" value="CAGL0K00253g"/>
</dbReference>
<dbReference type="KEGG" id="cgr:2890535"/>
<dbReference type="CGD" id="CAL0134553">
    <property type="gene designation" value="CAGL0K00253g"/>
</dbReference>
<dbReference type="VEuPathDB" id="FungiDB:CAGL0K00253g"/>
<dbReference type="eggNOG" id="ENOG502S444">
    <property type="taxonomic scope" value="Eukaryota"/>
</dbReference>
<dbReference type="HOGENOM" id="CLU_111217_0_0_1"/>
<dbReference type="InParanoid" id="Q6FNF9"/>
<dbReference type="OMA" id="KQTAQEH"/>
<dbReference type="Proteomes" id="UP000002428">
    <property type="component" value="Chromosome K"/>
</dbReference>
<dbReference type="GO" id="GO:0005634">
    <property type="term" value="C:nucleus"/>
    <property type="evidence" value="ECO:0007669"/>
    <property type="project" value="UniProtKB-SubCell"/>
</dbReference>
<dbReference type="GO" id="GO:0003677">
    <property type="term" value="F:DNA binding"/>
    <property type="evidence" value="ECO:0007669"/>
    <property type="project" value="UniProtKB-KW"/>
</dbReference>
<dbReference type="GO" id="GO:0003723">
    <property type="term" value="F:RNA binding"/>
    <property type="evidence" value="ECO:0007669"/>
    <property type="project" value="UniProtKB-KW"/>
</dbReference>
<dbReference type="GO" id="GO:0016973">
    <property type="term" value="P:poly(A)+ mRNA export from nucleus"/>
    <property type="evidence" value="ECO:0007669"/>
    <property type="project" value="EnsemblFungi"/>
</dbReference>
<dbReference type="CDD" id="cd12295">
    <property type="entry name" value="RRM_YRA2"/>
    <property type="match status" value="1"/>
</dbReference>
<dbReference type="Gene3D" id="3.30.70.330">
    <property type="match status" value="1"/>
</dbReference>
<dbReference type="InterPro" id="IPR012677">
    <property type="entry name" value="Nucleotide-bd_a/b_plait_sf"/>
</dbReference>
<dbReference type="InterPro" id="IPR035979">
    <property type="entry name" value="RBD_domain_sf"/>
</dbReference>
<dbReference type="InterPro" id="IPR000504">
    <property type="entry name" value="RRM_dom"/>
</dbReference>
<dbReference type="InterPro" id="IPR034396">
    <property type="entry name" value="Yra2_RRM"/>
</dbReference>
<dbReference type="Pfam" id="PF00076">
    <property type="entry name" value="RRM_1"/>
    <property type="match status" value="1"/>
</dbReference>
<dbReference type="SMART" id="SM00360">
    <property type="entry name" value="RRM"/>
    <property type="match status" value="1"/>
</dbReference>
<dbReference type="SUPFAM" id="SSF54928">
    <property type="entry name" value="RNA-binding domain, RBD"/>
    <property type="match status" value="1"/>
</dbReference>
<dbReference type="PROSITE" id="PS50102">
    <property type="entry name" value="RRM"/>
    <property type="match status" value="1"/>
</dbReference>
<evidence type="ECO:0000250" key="1"/>
<evidence type="ECO:0000255" key="2">
    <source>
        <dbReference type="PROSITE-ProRule" id="PRU00176"/>
    </source>
</evidence>
<evidence type="ECO:0000256" key="3">
    <source>
        <dbReference type="SAM" id="MobiDB-lite"/>
    </source>
</evidence>
<evidence type="ECO:0000305" key="4"/>
<feature type="chain" id="PRO_0000409541" description="RNA annealing protein YRA2">
    <location>
        <begin position="1"/>
        <end position="168"/>
    </location>
</feature>
<feature type="domain" description="RRM" evidence="2">
    <location>
        <begin position="40"/>
        <end position="114"/>
    </location>
</feature>
<feature type="region of interest" description="Disordered" evidence="3">
    <location>
        <begin position="113"/>
        <end position="152"/>
    </location>
</feature>
<reference key="1">
    <citation type="journal article" date="2004" name="Nature">
        <title>Genome evolution in yeasts.</title>
        <authorList>
            <person name="Dujon B."/>
            <person name="Sherman D."/>
            <person name="Fischer G."/>
            <person name="Durrens P."/>
            <person name="Casaregola S."/>
            <person name="Lafontaine I."/>
            <person name="de Montigny J."/>
            <person name="Marck C."/>
            <person name="Neuveglise C."/>
            <person name="Talla E."/>
            <person name="Goffard N."/>
            <person name="Frangeul L."/>
            <person name="Aigle M."/>
            <person name="Anthouard V."/>
            <person name="Babour A."/>
            <person name="Barbe V."/>
            <person name="Barnay S."/>
            <person name="Blanchin S."/>
            <person name="Beckerich J.-M."/>
            <person name="Beyne E."/>
            <person name="Bleykasten C."/>
            <person name="Boisrame A."/>
            <person name="Boyer J."/>
            <person name="Cattolico L."/>
            <person name="Confanioleri F."/>
            <person name="de Daruvar A."/>
            <person name="Despons L."/>
            <person name="Fabre E."/>
            <person name="Fairhead C."/>
            <person name="Ferry-Dumazet H."/>
            <person name="Groppi A."/>
            <person name="Hantraye F."/>
            <person name="Hennequin C."/>
            <person name="Jauniaux N."/>
            <person name="Joyet P."/>
            <person name="Kachouri R."/>
            <person name="Kerrest A."/>
            <person name="Koszul R."/>
            <person name="Lemaire M."/>
            <person name="Lesur I."/>
            <person name="Ma L."/>
            <person name="Muller H."/>
            <person name="Nicaud J.-M."/>
            <person name="Nikolski M."/>
            <person name="Oztas S."/>
            <person name="Ozier-Kalogeropoulos O."/>
            <person name="Pellenz S."/>
            <person name="Potier S."/>
            <person name="Richard G.-F."/>
            <person name="Straub M.-L."/>
            <person name="Suleau A."/>
            <person name="Swennen D."/>
            <person name="Tekaia F."/>
            <person name="Wesolowski-Louvel M."/>
            <person name="Westhof E."/>
            <person name="Wirth B."/>
            <person name="Zeniou-Meyer M."/>
            <person name="Zivanovic Y."/>
            <person name="Bolotin-Fukuhara M."/>
            <person name="Thierry A."/>
            <person name="Bouchier C."/>
            <person name="Caudron B."/>
            <person name="Scarpelli C."/>
            <person name="Gaillardin C."/>
            <person name="Weissenbach J."/>
            <person name="Wincker P."/>
            <person name="Souciet J.-L."/>
        </authorList>
    </citation>
    <scope>NUCLEOTIDE SEQUENCE [LARGE SCALE GENOMIC DNA]</scope>
    <source>
        <strain>ATCC 2001 / BCRC 20586 / JCM 3761 / NBRC 0622 / NRRL Y-65 / CBS 138</strain>
    </source>
</reference>
<keyword id="KW-0238">DNA-binding</keyword>
<keyword id="KW-0509">mRNA transport</keyword>
<keyword id="KW-0539">Nucleus</keyword>
<keyword id="KW-1185">Reference proteome</keyword>
<keyword id="KW-0694">RNA-binding</keyword>
<keyword id="KW-0813">Transport</keyword>
<sequence length="168" mass="19922">MSQNTKHHRVTNYRRRDLRNTLESRLGLPVEKRRLVPQLFRLKITNIGLDVSDYTILDIIKEFGEPEYINFRDHKDSRSCISDFKDNEIATKLIEKYNNFEINGKSIQVTLLDQQKRKRDADQERRKLRHGPRGGYGSHYTKSQKPIEQRNKTVDELNAELDAYMKES</sequence>